<reference key="1">
    <citation type="journal article" date="2008" name="J. Bacteriol.">
        <title>Comparative genome sequence analysis of multidrug-resistant Acinetobacter baumannii.</title>
        <authorList>
            <person name="Adams M.D."/>
            <person name="Goglin K."/>
            <person name="Molyneaux N."/>
            <person name="Hujer K.M."/>
            <person name="Lavender H."/>
            <person name="Jamison J.J."/>
            <person name="MacDonald I.J."/>
            <person name="Martin K.M."/>
            <person name="Russo T."/>
            <person name="Campagnari A.A."/>
            <person name="Hujer A.M."/>
            <person name="Bonomo R.A."/>
            <person name="Gill S.R."/>
        </authorList>
    </citation>
    <scope>NUCLEOTIDE SEQUENCE [LARGE SCALE GENOMIC DNA]</scope>
    <source>
        <strain>AB0057</strain>
    </source>
</reference>
<sequence>MLASLIGGIFGTKNERELKRMRKIVEQINALEPTISALSDADLSAKTPEFKQRYNNGESLDKLLPEAFAVCREAAKRVMGMRHYDVQLIGGITLHEGKIAEMRTGEGKTLMGTLACYLNALSGEGVHVITVNDYLAQRDAELNRPLFEFLGLSIGTIYSMQEPAEKAAAYLADITYGTNNEFGFDYLRDNMVFSLAEKKQRGLHYAIIDEVDSILIDEARTPLIISGQSEDSSHLYTAINTIPPKLRPQKEEKVADGGHFWIDEKQRSVEMTEIGYETVEQELIQMGLLAEGESLYSATNLNLVHHVSAAIRAHFLFQRDVHYIIHDGEVIIVDEHTGRTMPGRRWSEGLHQAVEAKEGLAIQPENQTLATTTFQNYFRLYKKLSGMTGTADTEAAEMKEIYGLDVVIIPTHRPMIRNDQNDLIYLNRNGKYNAIIQEIMNIRQQGVAPILIGTATIEASEILSSKLKQAGIHHEVLNAKQHEREADIIAQAGSPNAVTIATNMAGRGTDIILGGNWKAKLAKLENPTPEDEARLKAQWEQDHEDVLQAGGLHIIGSERHESRRIDNQLRGRAGRQGDPGVSRFYLSLEDDLMRIFAGDRVVAMMRAMGLKEDEAIEHKMVSRSIENAQRKVEARNFDIRKNLLKYDDVNNEQRKIIYSQRDEILAENTLQEYVEEMHREVMQAMIANFIPPESIHDQWDVEGLENALRIDLGIELPVQEWLEQDRRLDEEGLVERISDEVIARYRQRRAQMGDESAAMLERHFVLNSLDRHWKDHLAAMDYLRQGIHLRGYAQKNPEQEYKKEAFNLFVNMLGVIKTDVVTDLSRVHIPTPEELAEMEAQQQQQAEAMKLSFEHDDVDGLTGEVTASQEALNDSATEQQTFPVPESRNAPCPCGSGLKYKQCHGKI</sequence>
<name>SECA_ACIB5</name>
<feature type="chain" id="PRO_1000144962" description="Protein translocase subunit SecA">
    <location>
        <begin position="1"/>
        <end position="907"/>
    </location>
</feature>
<feature type="binding site" evidence="1">
    <location>
        <position position="87"/>
    </location>
    <ligand>
        <name>ATP</name>
        <dbReference type="ChEBI" id="CHEBI:30616"/>
    </ligand>
</feature>
<feature type="binding site" evidence="1">
    <location>
        <begin position="105"/>
        <end position="109"/>
    </location>
    <ligand>
        <name>ATP</name>
        <dbReference type="ChEBI" id="CHEBI:30616"/>
    </ligand>
</feature>
<feature type="binding site" evidence="1">
    <location>
        <position position="510"/>
    </location>
    <ligand>
        <name>ATP</name>
        <dbReference type="ChEBI" id="CHEBI:30616"/>
    </ligand>
</feature>
<feature type="binding site" evidence="1">
    <location>
        <position position="892"/>
    </location>
    <ligand>
        <name>Zn(2+)</name>
        <dbReference type="ChEBI" id="CHEBI:29105"/>
    </ligand>
</feature>
<feature type="binding site" evidence="1">
    <location>
        <position position="894"/>
    </location>
    <ligand>
        <name>Zn(2+)</name>
        <dbReference type="ChEBI" id="CHEBI:29105"/>
    </ligand>
</feature>
<feature type="binding site" evidence="1">
    <location>
        <position position="903"/>
    </location>
    <ligand>
        <name>Zn(2+)</name>
        <dbReference type="ChEBI" id="CHEBI:29105"/>
    </ligand>
</feature>
<feature type="binding site" evidence="1">
    <location>
        <position position="904"/>
    </location>
    <ligand>
        <name>Zn(2+)</name>
        <dbReference type="ChEBI" id="CHEBI:29105"/>
    </ligand>
</feature>
<comment type="function">
    <text evidence="1">Part of the Sec protein translocase complex. Interacts with the SecYEG preprotein conducting channel. Has a central role in coupling the hydrolysis of ATP to the transfer of proteins into and across the cell membrane, serving both as a receptor for the preprotein-SecB complex and as an ATP-driven molecular motor driving the stepwise translocation of polypeptide chains across the membrane.</text>
</comment>
<comment type="catalytic activity">
    <reaction evidence="1">
        <text>ATP + H2O + cellular proteinSide 1 = ADP + phosphate + cellular proteinSide 2.</text>
        <dbReference type="EC" id="7.4.2.8"/>
    </reaction>
</comment>
<comment type="cofactor">
    <cofactor evidence="1">
        <name>Zn(2+)</name>
        <dbReference type="ChEBI" id="CHEBI:29105"/>
    </cofactor>
    <text evidence="1">May bind 1 zinc ion per subunit.</text>
</comment>
<comment type="subunit">
    <text evidence="1">Monomer and homodimer. Part of the essential Sec protein translocation apparatus which comprises SecA, SecYEG and auxiliary proteins SecDF-YajC and YidC.</text>
</comment>
<comment type="subcellular location">
    <subcellularLocation>
        <location evidence="1">Cell inner membrane</location>
        <topology evidence="1">Peripheral membrane protein</topology>
        <orientation evidence="1">Cytoplasmic side</orientation>
    </subcellularLocation>
    <subcellularLocation>
        <location evidence="1">Cytoplasm</location>
    </subcellularLocation>
    <text evidence="1">Distribution is 50-50.</text>
</comment>
<comment type="similarity">
    <text evidence="1">Belongs to the SecA family.</text>
</comment>
<protein>
    <recommendedName>
        <fullName evidence="1">Protein translocase subunit SecA</fullName>
        <ecNumber evidence="1">7.4.2.8</ecNumber>
    </recommendedName>
</protein>
<accession>B7I8J5</accession>
<dbReference type="EC" id="7.4.2.8" evidence="1"/>
<dbReference type="EMBL" id="CP001182">
    <property type="protein sequence ID" value="ACJ41938.1"/>
    <property type="molecule type" value="Genomic_DNA"/>
</dbReference>
<dbReference type="RefSeq" id="WP_000881342.1">
    <property type="nucleotide sequence ID" value="NC_011586.2"/>
</dbReference>
<dbReference type="SMR" id="B7I8J5"/>
<dbReference type="KEGG" id="abn:AB57_3366"/>
<dbReference type="HOGENOM" id="CLU_005314_3_0_6"/>
<dbReference type="Proteomes" id="UP000007094">
    <property type="component" value="Chromosome"/>
</dbReference>
<dbReference type="GO" id="GO:0031522">
    <property type="term" value="C:cell envelope Sec protein transport complex"/>
    <property type="evidence" value="ECO:0007669"/>
    <property type="project" value="TreeGrafter"/>
</dbReference>
<dbReference type="GO" id="GO:0005829">
    <property type="term" value="C:cytosol"/>
    <property type="evidence" value="ECO:0007669"/>
    <property type="project" value="TreeGrafter"/>
</dbReference>
<dbReference type="GO" id="GO:0005886">
    <property type="term" value="C:plasma membrane"/>
    <property type="evidence" value="ECO:0007669"/>
    <property type="project" value="UniProtKB-SubCell"/>
</dbReference>
<dbReference type="GO" id="GO:0005524">
    <property type="term" value="F:ATP binding"/>
    <property type="evidence" value="ECO:0007669"/>
    <property type="project" value="UniProtKB-UniRule"/>
</dbReference>
<dbReference type="GO" id="GO:0046872">
    <property type="term" value="F:metal ion binding"/>
    <property type="evidence" value="ECO:0007669"/>
    <property type="project" value="UniProtKB-KW"/>
</dbReference>
<dbReference type="GO" id="GO:0008564">
    <property type="term" value="F:protein-exporting ATPase activity"/>
    <property type="evidence" value="ECO:0007669"/>
    <property type="project" value="UniProtKB-EC"/>
</dbReference>
<dbReference type="GO" id="GO:0065002">
    <property type="term" value="P:intracellular protein transmembrane transport"/>
    <property type="evidence" value="ECO:0007669"/>
    <property type="project" value="UniProtKB-UniRule"/>
</dbReference>
<dbReference type="GO" id="GO:0017038">
    <property type="term" value="P:protein import"/>
    <property type="evidence" value="ECO:0007669"/>
    <property type="project" value="InterPro"/>
</dbReference>
<dbReference type="GO" id="GO:0006605">
    <property type="term" value="P:protein targeting"/>
    <property type="evidence" value="ECO:0007669"/>
    <property type="project" value="UniProtKB-UniRule"/>
</dbReference>
<dbReference type="GO" id="GO:0043952">
    <property type="term" value="P:protein transport by the Sec complex"/>
    <property type="evidence" value="ECO:0007669"/>
    <property type="project" value="TreeGrafter"/>
</dbReference>
<dbReference type="CDD" id="cd17928">
    <property type="entry name" value="DEXDc_SecA"/>
    <property type="match status" value="1"/>
</dbReference>
<dbReference type="CDD" id="cd18803">
    <property type="entry name" value="SF2_C_secA"/>
    <property type="match status" value="1"/>
</dbReference>
<dbReference type="FunFam" id="3.40.50.300:FF:000113">
    <property type="entry name" value="Preprotein translocase subunit SecA"/>
    <property type="match status" value="1"/>
</dbReference>
<dbReference type="FunFam" id="3.90.1440.10:FF:000001">
    <property type="entry name" value="Preprotein translocase subunit SecA"/>
    <property type="match status" value="1"/>
</dbReference>
<dbReference type="FunFam" id="1.10.3060.10:FF:000003">
    <property type="entry name" value="Protein translocase subunit SecA"/>
    <property type="match status" value="1"/>
</dbReference>
<dbReference type="Gene3D" id="1.10.3060.10">
    <property type="entry name" value="Helical scaffold and wing domains of SecA"/>
    <property type="match status" value="1"/>
</dbReference>
<dbReference type="Gene3D" id="3.40.50.300">
    <property type="entry name" value="P-loop containing nucleotide triphosphate hydrolases"/>
    <property type="match status" value="2"/>
</dbReference>
<dbReference type="Gene3D" id="3.90.1440.10">
    <property type="entry name" value="SecA, preprotein cross-linking domain"/>
    <property type="match status" value="1"/>
</dbReference>
<dbReference type="HAMAP" id="MF_01382">
    <property type="entry name" value="SecA"/>
    <property type="match status" value="1"/>
</dbReference>
<dbReference type="InterPro" id="IPR014001">
    <property type="entry name" value="Helicase_ATP-bd"/>
</dbReference>
<dbReference type="InterPro" id="IPR001650">
    <property type="entry name" value="Helicase_C-like"/>
</dbReference>
<dbReference type="InterPro" id="IPR027417">
    <property type="entry name" value="P-loop_NTPase"/>
</dbReference>
<dbReference type="InterPro" id="IPR004027">
    <property type="entry name" value="SEC_C_motif"/>
</dbReference>
<dbReference type="InterPro" id="IPR000185">
    <property type="entry name" value="SecA"/>
</dbReference>
<dbReference type="InterPro" id="IPR020937">
    <property type="entry name" value="SecA_CS"/>
</dbReference>
<dbReference type="InterPro" id="IPR011115">
    <property type="entry name" value="SecA_DEAD"/>
</dbReference>
<dbReference type="InterPro" id="IPR014018">
    <property type="entry name" value="SecA_motor_DEAD"/>
</dbReference>
<dbReference type="InterPro" id="IPR011130">
    <property type="entry name" value="SecA_preprotein_X-link_dom"/>
</dbReference>
<dbReference type="InterPro" id="IPR044722">
    <property type="entry name" value="SecA_SF2_C"/>
</dbReference>
<dbReference type="InterPro" id="IPR011116">
    <property type="entry name" value="SecA_Wing/Scaffold"/>
</dbReference>
<dbReference type="InterPro" id="IPR036266">
    <property type="entry name" value="SecA_Wing/Scaffold_sf"/>
</dbReference>
<dbReference type="InterPro" id="IPR036670">
    <property type="entry name" value="SecA_X-link_sf"/>
</dbReference>
<dbReference type="NCBIfam" id="NF009538">
    <property type="entry name" value="PRK12904.1"/>
    <property type="match status" value="1"/>
</dbReference>
<dbReference type="NCBIfam" id="TIGR00963">
    <property type="entry name" value="secA"/>
    <property type="match status" value="1"/>
</dbReference>
<dbReference type="PANTHER" id="PTHR30612:SF0">
    <property type="entry name" value="CHLOROPLAST PROTEIN-TRANSPORTING ATPASE"/>
    <property type="match status" value="1"/>
</dbReference>
<dbReference type="PANTHER" id="PTHR30612">
    <property type="entry name" value="SECA INNER MEMBRANE COMPONENT OF SEC PROTEIN SECRETION SYSTEM"/>
    <property type="match status" value="1"/>
</dbReference>
<dbReference type="Pfam" id="PF21090">
    <property type="entry name" value="P-loop_SecA"/>
    <property type="match status" value="1"/>
</dbReference>
<dbReference type="Pfam" id="PF02810">
    <property type="entry name" value="SEC-C"/>
    <property type="match status" value="1"/>
</dbReference>
<dbReference type="Pfam" id="PF07517">
    <property type="entry name" value="SecA_DEAD"/>
    <property type="match status" value="1"/>
</dbReference>
<dbReference type="Pfam" id="PF01043">
    <property type="entry name" value="SecA_PP_bind"/>
    <property type="match status" value="1"/>
</dbReference>
<dbReference type="Pfam" id="PF07516">
    <property type="entry name" value="SecA_SW"/>
    <property type="match status" value="1"/>
</dbReference>
<dbReference type="PRINTS" id="PR00906">
    <property type="entry name" value="SECA"/>
</dbReference>
<dbReference type="SMART" id="SM00957">
    <property type="entry name" value="SecA_DEAD"/>
    <property type="match status" value="1"/>
</dbReference>
<dbReference type="SMART" id="SM00958">
    <property type="entry name" value="SecA_PP_bind"/>
    <property type="match status" value="1"/>
</dbReference>
<dbReference type="SUPFAM" id="SSF81886">
    <property type="entry name" value="Helical scaffold and wing domains of SecA"/>
    <property type="match status" value="1"/>
</dbReference>
<dbReference type="SUPFAM" id="SSF52540">
    <property type="entry name" value="P-loop containing nucleoside triphosphate hydrolases"/>
    <property type="match status" value="2"/>
</dbReference>
<dbReference type="SUPFAM" id="SSF81767">
    <property type="entry name" value="Pre-protein crosslinking domain of SecA"/>
    <property type="match status" value="1"/>
</dbReference>
<dbReference type="PROSITE" id="PS01312">
    <property type="entry name" value="SECA"/>
    <property type="match status" value="1"/>
</dbReference>
<dbReference type="PROSITE" id="PS51196">
    <property type="entry name" value="SECA_MOTOR_DEAD"/>
    <property type="match status" value="1"/>
</dbReference>
<proteinExistence type="inferred from homology"/>
<organism>
    <name type="scientific">Acinetobacter baumannii (strain AB0057)</name>
    <dbReference type="NCBI Taxonomy" id="480119"/>
    <lineage>
        <taxon>Bacteria</taxon>
        <taxon>Pseudomonadati</taxon>
        <taxon>Pseudomonadota</taxon>
        <taxon>Gammaproteobacteria</taxon>
        <taxon>Moraxellales</taxon>
        <taxon>Moraxellaceae</taxon>
        <taxon>Acinetobacter</taxon>
        <taxon>Acinetobacter calcoaceticus/baumannii complex</taxon>
    </lineage>
</organism>
<keyword id="KW-0067">ATP-binding</keyword>
<keyword id="KW-0997">Cell inner membrane</keyword>
<keyword id="KW-1003">Cell membrane</keyword>
<keyword id="KW-0963">Cytoplasm</keyword>
<keyword id="KW-0472">Membrane</keyword>
<keyword id="KW-0479">Metal-binding</keyword>
<keyword id="KW-0547">Nucleotide-binding</keyword>
<keyword id="KW-0653">Protein transport</keyword>
<keyword id="KW-1278">Translocase</keyword>
<keyword id="KW-0811">Translocation</keyword>
<keyword id="KW-0813">Transport</keyword>
<keyword id="KW-0862">Zinc</keyword>
<gene>
    <name evidence="1" type="primary">secA</name>
    <name type="ordered locus">AB57_3366</name>
</gene>
<evidence type="ECO:0000255" key="1">
    <source>
        <dbReference type="HAMAP-Rule" id="MF_01382"/>
    </source>
</evidence>